<gene>
    <name type="primary">Lrrc23</name>
    <name type="synonym">Lrpb7</name>
</gene>
<proteinExistence type="evidence at protein level"/>
<comment type="function">
    <text evidence="4 5">Essential for sperm motility and male fertility. Plays an important role in the proper assembly of the third radial spoke (RS3) head and the bridge structure between RS2 and RS3 in the sperm flagella.</text>
</comment>
<comment type="subunit">
    <text evidence="1 4 5">Component of the axonemal radial spoke complex (PubMed:34585727, PubMed:38091523). Interacts with RSPH3A and RSPH3B (PubMed:34585727). Interacts with RSPH9 (By similarity).</text>
</comment>
<comment type="subcellular location">
    <subcellularLocation>
        <location evidence="4 5">Cytoplasm</location>
        <location evidence="4 5">Cytoskeleton</location>
        <location evidence="4 5">Flagellum axoneme</location>
    </subcellularLocation>
    <subcellularLocation>
        <location evidence="1">Cytoplasm</location>
    </subcellularLocation>
    <text evidence="6">Within the sperm flagellum, may be associated with the head of radial spoke 3.</text>
</comment>
<comment type="tissue specificity">
    <text evidence="4 5">Expressed in the testis (at protein level).</text>
</comment>
<comment type="disruption phenotype">
    <text evidence="4">Mice show male infertility due to impaired sperm motility but do not show compromised respiratory ciliary motility. Disrupted assembly of radial spokes seen in the sperm flagella.</text>
</comment>
<accession>O35125</accession>
<sequence>MSDEDDVDDVDAEQDEVESDKEIEEWEDYRKETEEASEEWLPTPITEAMMKEGLSLLCKIGSGLAHAYIKLEAKDRDLTDISLLRSYIHLRYVDISENHITDISPLNSLTHLLWLKADGNQLRSARMNELPYLQIASFSYNQIIDTEGIFHPRLGSLDLKGNRIHQVTGLDPERLSSLHTLELRGNQLESTKGIYLPKLKNLYLAQNLLKKVEGLENLSNLTTLHLRDNQIETLNGFSQEMKSLQYLNLRSNMISDLAELAKLRDLPKLRALVLLDNPCADETDYRQEALVQMAHLERLDKEFYEDDDRAEAEEIRQRLKEEQDQDLDPDQDMEPYLPPV</sequence>
<feature type="chain" id="PRO_0000264237" description="Leucine-rich repeat-containing protein 23">
    <location>
        <begin position="1"/>
        <end position="340"/>
    </location>
</feature>
<feature type="repeat" description="LRR 1">
    <location>
        <begin position="89"/>
        <end position="110"/>
    </location>
</feature>
<feature type="repeat" description="LRR 2">
    <location>
        <begin position="111"/>
        <end position="134"/>
    </location>
</feature>
<feature type="repeat" description="LRR 3">
    <location>
        <begin position="177"/>
        <end position="197"/>
    </location>
</feature>
<feature type="repeat" description="LRR 4">
    <location>
        <begin position="198"/>
        <end position="219"/>
    </location>
</feature>
<feature type="repeat" description="LRR 5">
    <location>
        <begin position="220"/>
        <end position="241"/>
    </location>
</feature>
<feature type="repeat" description="LRR 6">
    <location>
        <begin position="243"/>
        <end position="264"/>
    </location>
</feature>
<feature type="domain" description="LRRCT">
    <location>
        <begin position="277"/>
        <end position="315"/>
    </location>
</feature>
<feature type="region of interest" description="Disordered" evidence="3">
    <location>
        <begin position="1"/>
        <end position="38"/>
    </location>
</feature>
<feature type="region of interest" description="Interaction with RSPH9" evidence="1">
    <location>
        <begin position="205"/>
        <end position="340"/>
    </location>
</feature>
<feature type="region of interest" description="Disordered" evidence="3">
    <location>
        <begin position="317"/>
        <end position="340"/>
    </location>
</feature>
<feature type="coiled-coil region" evidence="2">
    <location>
        <begin position="305"/>
        <end position="328"/>
    </location>
</feature>
<feature type="compositionally biased region" description="Acidic residues" evidence="3">
    <location>
        <begin position="1"/>
        <end position="27"/>
    </location>
</feature>
<feature type="compositionally biased region" description="Acidic residues" evidence="3">
    <location>
        <begin position="323"/>
        <end position="333"/>
    </location>
</feature>
<feature type="mutagenesis site" description="Mice show defective sperm motility and male infertility. Impaired protein localization to sperm flagellum and disruption of the assembly of the third radial spoke head seen in the sperm flagellum." evidence="5">
    <original>AQNLLKKVEGLENLSNLTTLHLRDNQIETLNGFSQEMKSLQYLNLRSNMISDLAELAKLRDLPKLRALVLLDNPCADETDYRQEALVQMAHLERLDKEFYEDDDRAEAEEIRQRLKEEQDQDLDPDQDMEPYLPPV</original>
    <variation>VAHRALRWHREGGTAGNHGGDKASHGT</variation>
    <location>
        <begin position="205"/>
        <end position="340"/>
    </location>
</feature>
<dbReference type="EMBL" id="AC002397">
    <property type="protein sequence ID" value="AAC36001.1"/>
    <property type="molecule type" value="Genomic_DNA"/>
</dbReference>
<dbReference type="EMBL" id="BC049601">
    <property type="protein sequence ID" value="AAH49601.1"/>
    <property type="molecule type" value="mRNA"/>
</dbReference>
<dbReference type="CCDS" id="CCDS20528.1"/>
<dbReference type="RefSeq" id="NP_001289484.1">
    <property type="nucleotide sequence ID" value="NM_001302555.1"/>
</dbReference>
<dbReference type="RefSeq" id="XP_006505722.1">
    <property type="nucleotide sequence ID" value="XM_006505659.5"/>
</dbReference>
<dbReference type="RefSeq" id="XP_006505723.1">
    <property type="nucleotide sequence ID" value="XM_006505660.5"/>
</dbReference>
<dbReference type="RefSeq" id="XP_006505726.1">
    <property type="nucleotide sequence ID" value="XM_006505663.5"/>
</dbReference>
<dbReference type="RefSeq" id="XP_011239541.1">
    <property type="nucleotide sequence ID" value="XM_011241239.3"/>
</dbReference>
<dbReference type="RefSeq" id="XP_011239542.1">
    <property type="nucleotide sequence ID" value="XM_011241240.4"/>
</dbReference>
<dbReference type="SMR" id="O35125"/>
<dbReference type="FunCoup" id="O35125">
    <property type="interactions" value="566"/>
</dbReference>
<dbReference type="STRING" id="10090.ENSMUSP00000032218"/>
<dbReference type="PhosphoSitePlus" id="O35125"/>
<dbReference type="SwissPalm" id="O35125"/>
<dbReference type="PaxDb" id="10090-ENSMUSP00000032218"/>
<dbReference type="ProteomicsDB" id="252668"/>
<dbReference type="Antibodypedia" id="35084">
    <property type="antibodies" value="100 antibodies from 19 providers"/>
</dbReference>
<dbReference type="Ensembl" id="ENSMUST00000032218.10">
    <property type="protein sequence ID" value="ENSMUSP00000032218.4"/>
    <property type="gene ID" value="ENSMUSG00000030125.12"/>
</dbReference>
<dbReference type="Ensembl" id="ENSMUST00000112475.9">
    <property type="protein sequence ID" value="ENSMUSP00000108094.3"/>
    <property type="gene ID" value="ENSMUSG00000030125.12"/>
</dbReference>
<dbReference type="GeneID" id="16977"/>
<dbReference type="KEGG" id="mmu:16977"/>
<dbReference type="UCSC" id="uc009drv.2">
    <property type="organism name" value="mouse"/>
</dbReference>
<dbReference type="AGR" id="MGI:1315192"/>
<dbReference type="CTD" id="10233"/>
<dbReference type="MGI" id="MGI:1315192">
    <property type="gene designation" value="Lrrc23"/>
</dbReference>
<dbReference type="VEuPathDB" id="HostDB:ENSMUSG00000030125"/>
<dbReference type="eggNOG" id="KOG0531">
    <property type="taxonomic scope" value="Eukaryota"/>
</dbReference>
<dbReference type="GeneTree" id="ENSGT00940000159748"/>
<dbReference type="HOGENOM" id="CLU_056804_1_1_1"/>
<dbReference type="InParanoid" id="O35125"/>
<dbReference type="OMA" id="NPCTDES"/>
<dbReference type="OrthoDB" id="271226at2759"/>
<dbReference type="PhylomeDB" id="O35125"/>
<dbReference type="TreeFam" id="TF329158"/>
<dbReference type="BioGRID-ORCS" id="16977">
    <property type="hits" value="1 hit in 79 CRISPR screens"/>
</dbReference>
<dbReference type="PRO" id="PR:O35125"/>
<dbReference type="Proteomes" id="UP000000589">
    <property type="component" value="Chromosome 6"/>
</dbReference>
<dbReference type="RNAct" id="O35125">
    <property type="molecule type" value="protein"/>
</dbReference>
<dbReference type="Bgee" id="ENSMUSG00000030125">
    <property type="expression patterns" value="Expressed in spermatocyte and 76 other cell types or tissues"/>
</dbReference>
<dbReference type="ExpressionAtlas" id="O35125">
    <property type="expression patterns" value="baseline and differential"/>
</dbReference>
<dbReference type="GO" id="GO:0005856">
    <property type="term" value="C:cytoskeleton"/>
    <property type="evidence" value="ECO:0007669"/>
    <property type="project" value="UniProtKB-KW"/>
</dbReference>
<dbReference type="GO" id="GO:0005829">
    <property type="term" value="C:cytosol"/>
    <property type="evidence" value="ECO:0000314"/>
    <property type="project" value="MGI"/>
</dbReference>
<dbReference type="GO" id="GO:0036126">
    <property type="term" value="C:sperm flagellum"/>
    <property type="evidence" value="ECO:0000315"/>
    <property type="project" value="UniProtKB"/>
</dbReference>
<dbReference type="GO" id="GO:0030317">
    <property type="term" value="P:flagellated sperm motility"/>
    <property type="evidence" value="ECO:0000315"/>
    <property type="project" value="UniProtKB"/>
</dbReference>
<dbReference type="GO" id="GO:0062177">
    <property type="term" value="P:radial spoke assembly"/>
    <property type="evidence" value="ECO:0000315"/>
    <property type="project" value="UniProtKB"/>
</dbReference>
<dbReference type="FunFam" id="3.80.10.10:FF:001051">
    <property type="entry name" value="Leucine-rich repeat-containing 23"/>
    <property type="match status" value="1"/>
</dbReference>
<dbReference type="FunFam" id="3.80.10.10:FF:000310">
    <property type="entry name" value="leucine-rich repeat-containing protein 23"/>
    <property type="match status" value="1"/>
</dbReference>
<dbReference type="Gene3D" id="3.80.10.10">
    <property type="entry name" value="Ribonuclease Inhibitor"/>
    <property type="match status" value="2"/>
</dbReference>
<dbReference type="InterPro" id="IPR001611">
    <property type="entry name" value="Leu-rich_rpt"/>
</dbReference>
<dbReference type="InterPro" id="IPR003591">
    <property type="entry name" value="Leu-rich_rpt_typical-subtyp"/>
</dbReference>
<dbReference type="InterPro" id="IPR032675">
    <property type="entry name" value="LRR_dom_sf"/>
</dbReference>
<dbReference type="InterPro" id="IPR050836">
    <property type="entry name" value="SDS22/Internalin_LRR"/>
</dbReference>
<dbReference type="PANTHER" id="PTHR46652:SF8">
    <property type="entry name" value="LEUCINE RICH REPEAT CONTAINING 23"/>
    <property type="match status" value="1"/>
</dbReference>
<dbReference type="PANTHER" id="PTHR46652">
    <property type="entry name" value="LEUCINE-RICH REPEAT AND IQ DOMAIN-CONTAINING PROTEIN 1-RELATED"/>
    <property type="match status" value="1"/>
</dbReference>
<dbReference type="Pfam" id="PF13516">
    <property type="entry name" value="LRR_6"/>
    <property type="match status" value="1"/>
</dbReference>
<dbReference type="Pfam" id="PF14580">
    <property type="entry name" value="LRR_9"/>
    <property type="match status" value="1"/>
</dbReference>
<dbReference type="SMART" id="SM00365">
    <property type="entry name" value="LRR_SD22"/>
    <property type="match status" value="4"/>
</dbReference>
<dbReference type="SMART" id="SM00369">
    <property type="entry name" value="LRR_TYP"/>
    <property type="match status" value="3"/>
</dbReference>
<dbReference type="SUPFAM" id="SSF52058">
    <property type="entry name" value="L domain-like"/>
    <property type="match status" value="1"/>
</dbReference>
<dbReference type="PROSITE" id="PS51450">
    <property type="entry name" value="LRR"/>
    <property type="match status" value="6"/>
</dbReference>
<name>LRC23_MOUSE</name>
<protein>
    <recommendedName>
        <fullName>Leucine-rich repeat-containing protein 23</fullName>
    </recommendedName>
    <alternativeName>
        <fullName>Leucine-rich protein B7</fullName>
    </alternativeName>
</protein>
<organism>
    <name type="scientific">Mus musculus</name>
    <name type="common">Mouse</name>
    <dbReference type="NCBI Taxonomy" id="10090"/>
    <lineage>
        <taxon>Eukaryota</taxon>
        <taxon>Metazoa</taxon>
        <taxon>Chordata</taxon>
        <taxon>Craniata</taxon>
        <taxon>Vertebrata</taxon>
        <taxon>Euteleostomi</taxon>
        <taxon>Mammalia</taxon>
        <taxon>Eutheria</taxon>
        <taxon>Euarchontoglires</taxon>
        <taxon>Glires</taxon>
        <taxon>Rodentia</taxon>
        <taxon>Myomorpha</taxon>
        <taxon>Muroidea</taxon>
        <taxon>Muridae</taxon>
        <taxon>Murinae</taxon>
        <taxon>Mus</taxon>
        <taxon>Mus</taxon>
    </lineage>
</organism>
<keyword id="KW-0966">Cell projection</keyword>
<keyword id="KW-0969">Cilium</keyword>
<keyword id="KW-0175">Coiled coil</keyword>
<keyword id="KW-0963">Cytoplasm</keyword>
<keyword id="KW-0206">Cytoskeleton</keyword>
<keyword id="KW-0282">Flagellum</keyword>
<keyword id="KW-0433">Leucine-rich repeat</keyword>
<keyword id="KW-1185">Reference proteome</keyword>
<keyword id="KW-0677">Repeat</keyword>
<evidence type="ECO:0000250" key="1">
    <source>
        <dbReference type="UniProtKB" id="Q53EV4"/>
    </source>
</evidence>
<evidence type="ECO:0000255" key="2"/>
<evidence type="ECO:0000256" key="3">
    <source>
        <dbReference type="SAM" id="MobiDB-lite"/>
    </source>
</evidence>
<evidence type="ECO:0000269" key="4">
    <source>
    </source>
</evidence>
<evidence type="ECO:0000269" key="5">
    <source>
    </source>
</evidence>
<evidence type="ECO:0000305" key="6">
    <source>
    </source>
</evidence>
<reference key="1">
    <citation type="journal article" date="1998" name="Genome Res.">
        <title>Comparative sequence analysis of a gene-rich cluster at human chromosome 12p13 and its syntenic region in mouse chromosome 6.</title>
        <authorList>
            <person name="Ansari-Lari M.A."/>
            <person name="Oeltjen J.C."/>
            <person name="Schwartz S."/>
            <person name="Zhang Z."/>
            <person name="Muzny D.M."/>
            <person name="Lu J."/>
            <person name="Gorrell J.H."/>
            <person name="Chinault A.C."/>
            <person name="Belmont J.W."/>
            <person name="Miller W."/>
            <person name="Gibbs R.A."/>
        </authorList>
    </citation>
    <scope>NUCLEOTIDE SEQUENCE [GENOMIC DNA]</scope>
</reference>
<reference key="2">
    <citation type="journal article" date="2004" name="Genome Res.">
        <title>The status, quality, and expansion of the NIH full-length cDNA project: the Mammalian Gene Collection (MGC).</title>
        <authorList>
            <consortium name="The MGC Project Team"/>
        </authorList>
    </citation>
    <scope>NUCLEOTIDE SEQUENCE [LARGE SCALE MRNA]</scope>
    <source>
        <tissue>Testis</tissue>
    </source>
</reference>
<reference key="3">
    <citation type="journal article" date="2010" name="Cell">
        <title>A tissue-specific atlas of mouse protein phosphorylation and expression.</title>
        <authorList>
            <person name="Huttlin E.L."/>
            <person name="Jedrychowski M.P."/>
            <person name="Elias J.E."/>
            <person name="Goswami T."/>
            <person name="Rad R."/>
            <person name="Beausoleil S.A."/>
            <person name="Villen J."/>
            <person name="Haas W."/>
            <person name="Sowa M.E."/>
            <person name="Gygi S.P."/>
        </authorList>
    </citation>
    <scope>IDENTIFICATION BY MASS SPECTROMETRY [LARGE SCALE ANALYSIS]</scope>
    <source>
        <tissue>Testis</tissue>
    </source>
</reference>
<reference key="4">
    <citation type="journal article" date="2021" name="J. Cell Sci.">
        <title>LRRC23 is a conserved component of the radial spoke that is necessary for sperm motility and male fertility in mice.</title>
        <authorList>
            <person name="Zhang X."/>
            <person name="Sun J."/>
            <person name="Lu Y."/>
            <person name="Zhang J."/>
            <person name="Shimada K."/>
            <person name="Noda T."/>
            <person name="Zhao S."/>
            <person name="Koyano T."/>
            <person name="Matsuyama M."/>
            <person name="Zhou S."/>
            <person name="Wu J."/>
            <person name="Ikawa M."/>
            <person name="Liu M."/>
        </authorList>
    </citation>
    <scope>FUNCTION</scope>
    <scope>DISRUPTION PHENOTYPE</scope>
    <scope>SUBUNIT</scope>
    <scope>TISSUE SPECIFICITY</scope>
    <scope>SUBCELLULAR LOCATION</scope>
    <scope>INTERACTION WITH RSPH3A AND RSPH3B</scope>
</reference>
<reference key="5">
    <citation type="journal article" date="2023" name="Elife">
        <title>LRRC23 truncation impairs radial spoke 3 head assembly and sperm motility underlying male infertility.</title>
        <authorList>
            <person name="Hwang J.Y."/>
            <person name="Chai P."/>
            <person name="Nawaz S."/>
            <person name="Choi J."/>
            <person name="Lopez-Giraldez F."/>
            <person name="Hussain S."/>
            <person name="Bilguvar K."/>
            <person name="Mane S."/>
            <person name="Lifton R.P."/>
            <person name="Ahmad W."/>
            <person name="Zhang K."/>
            <person name="Chung J.J."/>
        </authorList>
    </citation>
    <scope>MUTAGENESIS OF 205-ALA--VAL-340</scope>
    <scope>FUNCTION</scope>
    <scope>SUBUNIT</scope>
    <scope>SUBCELLULAR LOCATION</scope>
    <scope>TISSUE SPECIFICITY</scope>
</reference>